<accession>Q8UDS3</accession>
<name>TYSY_AGRFC</name>
<comment type="function">
    <text evidence="1">Catalyzes the reductive methylation of 2'-deoxyuridine-5'-monophosphate (dUMP) to 2'-deoxythymidine-5'-monophosphate (dTMP) while utilizing 5,10-methylenetetrahydrofolate (mTHF) as the methyl donor and reductant in the reaction, yielding dihydrofolate (DHF) as a by-product. This enzymatic reaction provides an intracellular de novo source of dTMP, an essential precursor for DNA biosynthesis.</text>
</comment>
<comment type="catalytic activity">
    <reaction evidence="1">
        <text>dUMP + (6R)-5,10-methylene-5,6,7,8-tetrahydrofolate = 7,8-dihydrofolate + dTMP</text>
        <dbReference type="Rhea" id="RHEA:12104"/>
        <dbReference type="ChEBI" id="CHEBI:15636"/>
        <dbReference type="ChEBI" id="CHEBI:57451"/>
        <dbReference type="ChEBI" id="CHEBI:63528"/>
        <dbReference type="ChEBI" id="CHEBI:246422"/>
        <dbReference type="EC" id="2.1.1.45"/>
    </reaction>
</comment>
<comment type="pathway">
    <text evidence="1">Pyrimidine metabolism; dTTP biosynthesis.</text>
</comment>
<comment type="subunit">
    <text evidence="1">Homodimer.</text>
</comment>
<comment type="subcellular location">
    <subcellularLocation>
        <location evidence="1">Cytoplasm</location>
    </subcellularLocation>
</comment>
<comment type="similarity">
    <text evidence="1">Belongs to the thymidylate synthase family. Bacterial-type ThyA subfamily.</text>
</comment>
<feature type="chain" id="PRO_0000140914" description="Thymidylate synthase">
    <location>
        <begin position="1"/>
        <end position="264"/>
    </location>
</feature>
<feature type="active site" description="Nucleophile" evidence="1">
    <location>
        <position position="146"/>
    </location>
</feature>
<feature type="binding site" description="in other chain" evidence="1">
    <location>
        <position position="21"/>
    </location>
    <ligand>
        <name>dUMP</name>
        <dbReference type="ChEBI" id="CHEBI:246422"/>
        <note>ligand shared between dimeric partners</note>
    </ligand>
</feature>
<feature type="binding site" evidence="1">
    <location>
        <position position="51"/>
    </location>
    <ligand>
        <name>(6R)-5,10-methylene-5,6,7,8-tetrahydrofolate</name>
        <dbReference type="ChEBI" id="CHEBI:15636"/>
    </ligand>
</feature>
<feature type="binding site" evidence="1">
    <location>
        <begin position="126"/>
        <end position="127"/>
    </location>
    <ligand>
        <name>dUMP</name>
        <dbReference type="ChEBI" id="CHEBI:246422"/>
        <note>ligand shared between dimeric partners</note>
    </ligand>
</feature>
<feature type="binding site" description="in other chain" evidence="1">
    <location>
        <begin position="166"/>
        <end position="169"/>
    </location>
    <ligand>
        <name>dUMP</name>
        <dbReference type="ChEBI" id="CHEBI:246422"/>
        <note>ligand shared between dimeric partners</note>
    </ligand>
</feature>
<feature type="binding site" evidence="1">
    <location>
        <position position="169"/>
    </location>
    <ligand>
        <name>(6R)-5,10-methylene-5,6,7,8-tetrahydrofolate</name>
        <dbReference type="ChEBI" id="CHEBI:15636"/>
    </ligand>
</feature>
<feature type="binding site" description="in other chain" evidence="1">
    <location>
        <position position="177"/>
    </location>
    <ligand>
        <name>dUMP</name>
        <dbReference type="ChEBI" id="CHEBI:246422"/>
        <note>ligand shared between dimeric partners</note>
    </ligand>
</feature>
<feature type="binding site" description="in other chain" evidence="1">
    <location>
        <begin position="207"/>
        <end position="209"/>
    </location>
    <ligand>
        <name>dUMP</name>
        <dbReference type="ChEBI" id="CHEBI:246422"/>
        <note>ligand shared between dimeric partners</note>
    </ligand>
</feature>
<feature type="binding site" evidence="1">
    <location>
        <position position="263"/>
    </location>
    <ligand>
        <name>(6R)-5,10-methylene-5,6,7,8-tetrahydrofolate</name>
        <dbReference type="ChEBI" id="CHEBI:15636"/>
    </ligand>
</feature>
<sequence length="264" mass="29875">MKQYLDLLRHVMETGSDRGDRTGTGTRSVFGYQMRFDLSEGFPVLTTKKLHLRSIIHELLWFLNGDTNIAYLKENGVSIWDEWADENGDLGPVYGAQWRSWPAPDGRHIDQIALLIEALKTNPNSRRHIVSAWNPALVDEMALPPCHCLFQFYVSDGKLSCQLYQRSADIFLGVPFNIASYALLTLMVAQVVGLKPGDFVHTLGDAHIYANHFEQAQLQMTRTPKALPTMRLNPDVKNLFGFKFEDFTLENYEADSSIKAPIAV</sequence>
<reference key="1">
    <citation type="journal article" date="2001" name="Science">
        <title>The genome of the natural genetic engineer Agrobacterium tumefaciens C58.</title>
        <authorList>
            <person name="Wood D.W."/>
            <person name="Setubal J.C."/>
            <person name="Kaul R."/>
            <person name="Monks D.E."/>
            <person name="Kitajima J.P."/>
            <person name="Okura V.K."/>
            <person name="Zhou Y."/>
            <person name="Chen L."/>
            <person name="Wood G.E."/>
            <person name="Almeida N.F. Jr."/>
            <person name="Woo L."/>
            <person name="Chen Y."/>
            <person name="Paulsen I.T."/>
            <person name="Eisen J.A."/>
            <person name="Karp P.D."/>
            <person name="Bovee D. Sr."/>
            <person name="Chapman P."/>
            <person name="Clendenning J."/>
            <person name="Deatherage G."/>
            <person name="Gillet W."/>
            <person name="Grant C."/>
            <person name="Kutyavin T."/>
            <person name="Levy R."/>
            <person name="Li M.-J."/>
            <person name="McClelland E."/>
            <person name="Palmieri A."/>
            <person name="Raymond C."/>
            <person name="Rouse G."/>
            <person name="Saenphimmachak C."/>
            <person name="Wu Z."/>
            <person name="Romero P."/>
            <person name="Gordon D."/>
            <person name="Zhang S."/>
            <person name="Yoo H."/>
            <person name="Tao Y."/>
            <person name="Biddle P."/>
            <person name="Jung M."/>
            <person name="Krespan W."/>
            <person name="Perry M."/>
            <person name="Gordon-Kamm B."/>
            <person name="Liao L."/>
            <person name="Kim S."/>
            <person name="Hendrick C."/>
            <person name="Zhao Z.-Y."/>
            <person name="Dolan M."/>
            <person name="Chumley F."/>
            <person name="Tingey S.V."/>
            <person name="Tomb J.-F."/>
            <person name="Gordon M.P."/>
            <person name="Olson M.V."/>
            <person name="Nester E.W."/>
        </authorList>
    </citation>
    <scope>NUCLEOTIDE SEQUENCE [LARGE SCALE GENOMIC DNA]</scope>
    <source>
        <strain>C58 / ATCC 33970</strain>
    </source>
</reference>
<reference key="2">
    <citation type="journal article" date="2001" name="Science">
        <title>Genome sequence of the plant pathogen and biotechnology agent Agrobacterium tumefaciens C58.</title>
        <authorList>
            <person name="Goodner B."/>
            <person name="Hinkle G."/>
            <person name="Gattung S."/>
            <person name="Miller N."/>
            <person name="Blanchard M."/>
            <person name="Qurollo B."/>
            <person name="Goldman B.S."/>
            <person name="Cao Y."/>
            <person name="Askenazi M."/>
            <person name="Halling C."/>
            <person name="Mullin L."/>
            <person name="Houmiel K."/>
            <person name="Gordon J."/>
            <person name="Vaudin M."/>
            <person name="Iartchouk O."/>
            <person name="Epp A."/>
            <person name="Liu F."/>
            <person name="Wollam C."/>
            <person name="Allinger M."/>
            <person name="Doughty D."/>
            <person name="Scott C."/>
            <person name="Lappas C."/>
            <person name="Markelz B."/>
            <person name="Flanagan C."/>
            <person name="Crowell C."/>
            <person name="Gurson J."/>
            <person name="Lomo C."/>
            <person name="Sear C."/>
            <person name="Strub G."/>
            <person name="Cielo C."/>
            <person name="Slater S."/>
        </authorList>
    </citation>
    <scope>NUCLEOTIDE SEQUENCE [LARGE SCALE GENOMIC DNA]</scope>
    <source>
        <strain>C58 / ATCC 33970</strain>
    </source>
</reference>
<dbReference type="EC" id="2.1.1.45" evidence="1"/>
<dbReference type="EMBL" id="AE007869">
    <property type="protein sequence ID" value="AAK87800.2"/>
    <property type="molecule type" value="Genomic_DNA"/>
</dbReference>
<dbReference type="PIR" id="AI2827">
    <property type="entry name" value="AI2827"/>
</dbReference>
<dbReference type="PIR" id="G97605">
    <property type="entry name" value="G97605"/>
</dbReference>
<dbReference type="RefSeq" id="NP_355015.2">
    <property type="nucleotide sequence ID" value="NC_003062.2"/>
</dbReference>
<dbReference type="RefSeq" id="WP_010972021.1">
    <property type="nucleotide sequence ID" value="NC_003062.2"/>
</dbReference>
<dbReference type="SMR" id="Q8UDS3"/>
<dbReference type="STRING" id="176299.Atu2047"/>
<dbReference type="EnsemblBacteria" id="AAK87800">
    <property type="protein sequence ID" value="AAK87800"/>
    <property type="gene ID" value="Atu2047"/>
</dbReference>
<dbReference type="GeneID" id="1134085"/>
<dbReference type="KEGG" id="atu:Atu2047"/>
<dbReference type="PATRIC" id="fig|176299.10.peg.2058"/>
<dbReference type="eggNOG" id="COG0207">
    <property type="taxonomic scope" value="Bacteria"/>
</dbReference>
<dbReference type="HOGENOM" id="CLU_021669_0_2_5"/>
<dbReference type="OrthoDB" id="9774633at2"/>
<dbReference type="PhylomeDB" id="Q8UDS3"/>
<dbReference type="BioCyc" id="AGRO:ATU2047-MONOMER"/>
<dbReference type="UniPathway" id="UPA00575"/>
<dbReference type="Proteomes" id="UP000000813">
    <property type="component" value="Chromosome circular"/>
</dbReference>
<dbReference type="GO" id="GO:0005829">
    <property type="term" value="C:cytosol"/>
    <property type="evidence" value="ECO:0007669"/>
    <property type="project" value="TreeGrafter"/>
</dbReference>
<dbReference type="GO" id="GO:0004799">
    <property type="term" value="F:thymidylate synthase activity"/>
    <property type="evidence" value="ECO:0007669"/>
    <property type="project" value="UniProtKB-UniRule"/>
</dbReference>
<dbReference type="GO" id="GO:0006231">
    <property type="term" value="P:dTMP biosynthetic process"/>
    <property type="evidence" value="ECO:0007669"/>
    <property type="project" value="UniProtKB-UniRule"/>
</dbReference>
<dbReference type="GO" id="GO:0006235">
    <property type="term" value="P:dTTP biosynthetic process"/>
    <property type="evidence" value="ECO:0007669"/>
    <property type="project" value="UniProtKB-UniRule"/>
</dbReference>
<dbReference type="GO" id="GO:0032259">
    <property type="term" value="P:methylation"/>
    <property type="evidence" value="ECO:0007669"/>
    <property type="project" value="UniProtKB-KW"/>
</dbReference>
<dbReference type="CDD" id="cd00351">
    <property type="entry name" value="TS_Pyrimidine_HMase"/>
    <property type="match status" value="1"/>
</dbReference>
<dbReference type="FunFam" id="3.30.572.10:FF:000001">
    <property type="entry name" value="Thymidylate synthase"/>
    <property type="match status" value="1"/>
</dbReference>
<dbReference type="Gene3D" id="3.30.572.10">
    <property type="entry name" value="Thymidylate synthase/dCMP hydroxymethylase domain"/>
    <property type="match status" value="1"/>
</dbReference>
<dbReference type="HAMAP" id="MF_00008">
    <property type="entry name" value="Thymidy_synth_bact"/>
    <property type="match status" value="1"/>
</dbReference>
<dbReference type="InterPro" id="IPR045097">
    <property type="entry name" value="Thymidate_synth/dCMP_Mease"/>
</dbReference>
<dbReference type="InterPro" id="IPR023451">
    <property type="entry name" value="Thymidate_synth/dCMP_Mease_dom"/>
</dbReference>
<dbReference type="InterPro" id="IPR036926">
    <property type="entry name" value="Thymidate_synth/dCMP_Mease_sf"/>
</dbReference>
<dbReference type="InterPro" id="IPR000398">
    <property type="entry name" value="Thymidylate_synthase"/>
</dbReference>
<dbReference type="InterPro" id="IPR020940">
    <property type="entry name" value="Thymidylate_synthase_AS"/>
</dbReference>
<dbReference type="NCBIfam" id="NF002497">
    <property type="entry name" value="PRK01827.1-3"/>
    <property type="match status" value="1"/>
</dbReference>
<dbReference type="NCBIfam" id="NF002499">
    <property type="entry name" value="PRK01827.1-5"/>
    <property type="match status" value="1"/>
</dbReference>
<dbReference type="NCBIfam" id="TIGR03284">
    <property type="entry name" value="thym_sym"/>
    <property type="match status" value="2"/>
</dbReference>
<dbReference type="PANTHER" id="PTHR11548:SF9">
    <property type="entry name" value="THYMIDYLATE SYNTHASE"/>
    <property type="match status" value="1"/>
</dbReference>
<dbReference type="PANTHER" id="PTHR11548">
    <property type="entry name" value="THYMIDYLATE SYNTHASE 1"/>
    <property type="match status" value="1"/>
</dbReference>
<dbReference type="Pfam" id="PF00303">
    <property type="entry name" value="Thymidylat_synt"/>
    <property type="match status" value="1"/>
</dbReference>
<dbReference type="PRINTS" id="PR00108">
    <property type="entry name" value="THYMDSNTHASE"/>
</dbReference>
<dbReference type="SUPFAM" id="SSF55831">
    <property type="entry name" value="Thymidylate synthase/dCMP hydroxymethylase"/>
    <property type="match status" value="1"/>
</dbReference>
<dbReference type="PROSITE" id="PS00091">
    <property type="entry name" value="THYMIDYLATE_SYNTHASE"/>
    <property type="match status" value="1"/>
</dbReference>
<proteinExistence type="inferred from homology"/>
<organism>
    <name type="scientific">Agrobacterium fabrum (strain C58 / ATCC 33970)</name>
    <name type="common">Agrobacterium tumefaciens (strain C58)</name>
    <dbReference type="NCBI Taxonomy" id="176299"/>
    <lineage>
        <taxon>Bacteria</taxon>
        <taxon>Pseudomonadati</taxon>
        <taxon>Pseudomonadota</taxon>
        <taxon>Alphaproteobacteria</taxon>
        <taxon>Hyphomicrobiales</taxon>
        <taxon>Rhizobiaceae</taxon>
        <taxon>Rhizobium/Agrobacterium group</taxon>
        <taxon>Agrobacterium</taxon>
        <taxon>Agrobacterium tumefaciens complex</taxon>
    </lineage>
</organism>
<evidence type="ECO:0000255" key="1">
    <source>
        <dbReference type="HAMAP-Rule" id="MF_00008"/>
    </source>
</evidence>
<keyword id="KW-0963">Cytoplasm</keyword>
<keyword id="KW-0489">Methyltransferase</keyword>
<keyword id="KW-0545">Nucleotide biosynthesis</keyword>
<keyword id="KW-1185">Reference proteome</keyword>
<keyword id="KW-0808">Transferase</keyword>
<protein>
    <recommendedName>
        <fullName evidence="1">Thymidylate synthase</fullName>
        <shortName evidence="1">TS</shortName>
        <shortName evidence="1">TSase</shortName>
        <ecNumber evidence="1">2.1.1.45</ecNumber>
    </recommendedName>
</protein>
<gene>
    <name evidence="1" type="primary">thyA</name>
    <name type="ordered locus">Atu2047</name>
    <name type="ORF">AGR_C_3709</name>
</gene>